<reference key="1">
    <citation type="journal article" date="2000" name="J. Gen. Virol.">
        <title>Complete sequence determination and genetic analysis of Banna virus and Kadipiro virus: proposal for assignment to a new genus (Seadornavirus) within the family Reoviridae.</title>
        <authorList>
            <person name="Attoui H."/>
            <person name="Billoir F."/>
            <person name="Biagini P."/>
            <person name="de Micco P."/>
            <person name="de Lamballerie X."/>
        </authorList>
    </citation>
    <scope>NUCLEOTIDE SEQUENCE [GENOMIC DNA]</scope>
    <source>
        <strain>JKT-6423</strain>
    </source>
</reference>
<reference key="2">
    <citation type="journal article" date="2005" name="J. Gen. Virol.">
        <title>Structural organization of an encephalitic human isolate of Banna virus (genus Seadornavirus, family Reoviridae).</title>
        <authorList>
            <person name="Mohd Jaafar F."/>
            <person name="Attoui H."/>
            <person name="Mertens P.P."/>
            <person name="de Micco P."/>
            <person name="de Lamballerie X."/>
        </authorList>
    </citation>
    <scope>SUBCELLULAR LOCATION</scope>
</reference>
<feature type="chain" id="PRO_0000404240" description="Outer capsid protein VP4">
    <location>
        <begin position="1"/>
        <end position="576"/>
    </location>
</feature>
<accession>Q9INI3</accession>
<sequence length="576" mass="63552">MAWVTQAYSSGLSQNSIISLTGNDRTVADGTFNSMIMPRAVIANEREHFMKTRIDKIEHDLSRNAKQEMMDRQSLAEDYSALNLAVGQEIKLDIATQHQLNRLGSSMYKADHEREAELTDLINRIRENEVTVNGILENQKAITAAERADLLLEVVASTAKSVSAAGRAAADGSGVVPVFGPSVANGIKVGIDIADSVAEAAIAVKESGIITQLNDVYHAFQSVHVAPNDIIKPAAVVAGTSTELIGNLQAIYSRLRSHSDIGFKKATVGDVIPHSYMVKPVNSTEYASWQLYVIHPVQGSLGLVVQVMGDALTYNVFAQYGTTSASEFGKTVLTGGATNTALEGTKVKFQTKVTAQQALALTMALKDAASMLSQGELIGYFEQYINLALEPDNLSLQDNMHKYHHLLTSQNSPIDWNYHDEEMHKWLDSRKITNYDTMKQKDGVVIADIHIPKVFNDLRNTTLHCKLEGKQNIAGYTVYEYLIGPWAHYGDIDYSVVVDTLNEETKWYCEIIGIDGHLIIEKSVQHKPEKILELTVNDDGLTSFKGKNHDRLKLKVYVKDSLAVKVFRNWIGINGT</sequence>
<name>VP4_BANNV</name>
<organism>
    <name type="scientific">Banna virus</name>
    <name type="common">BAV</name>
    <dbReference type="NCBI Taxonomy" id="77763"/>
    <lineage>
        <taxon>Viruses</taxon>
        <taxon>Riboviria</taxon>
        <taxon>Orthornavirae</taxon>
        <taxon>Duplornaviricota</taxon>
        <taxon>Resentoviricetes</taxon>
        <taxon>Reovirales</taxon>
        <taxon>Sedoreoviridae</taxon>
        <taxon>Seadornavirus</taxon>
        <taxon>Seadornavirus bannaense</taxon>
    </lineage>
</organism>
<protein>
    <recommendedName>
        <fullName>Outer capsid protein VP4</fullName>
    </recommendedName>
</protein>
<gene>
    <name type="primary">Segment-4</name>
    <name type="synonym">S4</name>
</gene>
<evidence type="ECO:0000269" key="1">
    <source>
    </source>
</evidence>
<comment type="subcellular location">
    <subcellularLocation>
        <location evidence="1">Virion</location>
    </subcellularLocation>
</comment>
<keyword id="KW-0167">Capsid protein</keyword>
<keyword id="KW-1152">Outer capsid protein</keyword>
<keyword id="KW-1185">Reference proteome</keyword>
<keyword id="KW-0946">Virion</keyword>
<dbReference type="EMBL" id="AF134516">
    <property type="protein sequence ID" value="AAF78857.1"/>
    <property type="molecule type" value="Genomic_RNA"/>
</dbReference>
<dbReference type="RefSeq" id="NP_694477.1">
    <property type="nucleotide sequence ID" value="NC_004219.1"/>
</dbReference>
<dbReference type="SMR" id="Q9INI3"/>
<dbReference type="KEGG" id="vg:995350"/>
<dbReference type="OrthoDB" id="31432at10239"/>
<dbReference type="Proteomes" id="UP000000832">
    <property type="component" value="Genome"/>
</dbReference>
<dbReference type="GO" id="GO:0039624">
    <property type="term" value="C:viral outer capsid"/>
    <property type="evidence" value="ECO:0007669"/>
    <property type="project" value="UniProtKB-KW"/>
</dbReference>
<dbReference type="InterPro" id="IPR026383">
    <property type="entry name" value="Seadorna_VP4"/>
</dbReference>
<dbReference type="NCBIfam" id="TIGR04235">
    <property type="entry name" value="seadorna_VP4"/>
    <property type="match status" value="1"/>
</dbReference>
<proteinExistence type="predicted"/>